<name>VATE2_BOVIN</name>
<keyword id="KW-0375">Hydrogen ion transport</keyword>
<keyword id="KW-0406">Ion transport</keyword>
<keyword id="KW-1185">Reference proteome</keyword>
<keyword id="KW-0813">Transport</keyword>
<proteinExistence type="evidence at transcript level"/>
<protein>
    <recommendedName>
        <fullName>V-type proton ATPase subunit E 2</fullName>
        <shortName>V-ATPase subunit E 2</shortName>
    </recommendedName>
    <alternativeName>
        <fullName>Vacuolar proton pump subunit E 2</fullName>
    </alternativeName>
</protein>
<reference key="1">
    <citation type="submission" date="2005-11" db="EMBL/GenBank/DDBJ databases">
        <authorList>
            <consortium name="NIH - Mammalian Gene Collection (MGC) project"/>
        </authorList>
    </citation>
    <scope>NUCLEOTIDE SEQUENCE [LARGE SCALE MRNA]</scope>
    <source>
        <strain>Crossbred X Angus</strain>
        <tissue>Liver</tissue>
    </source>
</reference>
<evidence type="ECO:0000250" key="1">
    <source>
        <dbReference type="UniProtKB" id="P11019"/>
    </source>
</evidence>
<evidence type="ECO:0000305" key="2"/>
<dbReference type="EMBL" id="BC109658">
    <property type="protein sequence ID" value="AAI09659.1"/>
    <property type="molecule type" value="mRNA"/>
</dbReference>
<dbReference type="RefSeq" id="NP_001073081.1">
    <property type="nucleotide sequence ID" value="NM_001079613.2"/>
</dbReference>
<dbReference type="RefSeq" id="XP_010808270.1">
    <property type="nucleotide sequence ID" value="XM_010809968.4"/>
</dbReference>
<dbReference type="RefSeq" id="XP_010808271.1">
    <property type="nucleotide sequence ID" value="XM_010809969.4"/>
</dbReference>
<dbReference type="RefSeq" id="XP_024854815.1">
    <property type="nucleotide sequence ID" value="XM_024999047.2"/>
</dbReference>
<dbReference type="RefSeq" id="XP_024854817.1">
    <property type="nucleotide sequence ID" value="XM_024999049.2"/>
</dbReference>
<dbReference type="SMR" id="Q32LB7"/>
<dbReference type="FunCoup" id="Q32LB7">
    <property type="interactions" value="1342"/>
</dbReference>
<dbReference type="STRING" id="9913.ENSBTAP00000018250"/>
<dbReference type="PaxDb" id="9913-ENSBTAP00000018250"/>
<dbReference type="Ensembl" id="ENSBTAT00000018250.4">
    <property type="protein sequence ID" value="ENSBTAP00000018250.3"/>
    <property type="gene ID" value="ENSBTAG00000013734.5"/>
</dbReference>
<dbReference type="Ensembl" id="ENSBTAT00000088698.1">
    <property type="protein sequence ID" value="ENSBTAP00000097495.1"/>
    <property type="gene ID" value="ENSBTAG00000013734.5"/>
</dbReference>
<dbReference type="Ensembl" id="ENSBTAT00000110596.1">
    <property type="protein sequence ID" value="ENSBTAP00000101780.1"/>
    <property type="gene ID" value="ENSBTAG00000013734.5"/>
</dbReference>
<dbReference type="GeneID" id="540113"/>
<dbReference type="KEGG" id="bta:540113"/>
<dbReference type="CTD" id="90423"/>
<dbReference type="VEuPathDB" id="HostDB:ENSBTAG00000013734"/>
<dbReference type="VGNC" id="VGNC:26323">
    <property type="gene designation" value="ATP6V1E2"/>
</dbReference>
<dbReference type="eggNOG" id="KOG1664">
    <property type="taxonomic scope" value="Eukaryota"/>
</dbReference>
<dbReference type="GeneTree" id="ENSGT00390000002730"/>
<dbReference type="HOGENOM" id="CLU_073641_2_0_1"/>
<dbReference type="InParanoid" id="Q32LB7"/>
<dbReference type="OMA" id="CRPQDHL"/>
<dbReference type="OrthoDB" id="10263003at2759"/>
<dbReference type="TreeFam" id="TF313479"/>
<dbReference type="Reactome" id="R-BTA-1222556">
    <property type="pathway name" value="ROS and RNS production in phagocytes"/>
</dbReference>
<dbReference type="Reactome" id="R-BTA-77387">
    <property type="pathway name" value="Insulin receptor recycling"/>
</dbReference>
<dbReference type="Reactome" id="R-BTA-917977">
    <property type="pathway name" value="Transferrin endocytosis and recycling"/>
</dbReference>
<dbReference type="Reactome" id="R-BTA-9639288">
    <property type="pathway name" value="Amino acids regulate mTORC1"/>
</dbReference>
<dbReference type="Reactome" id="R-BTA-983712">
    <property type="pathway name" value="Ion channel transport"/>
</dbReference>
<dbReference type="Proteomes" id="UP000009136">
    <property type="component" value="Chromosome 11"/>
</dbReference>
<dbReference type="Bgee" id="ENSBTAG00000013734">
    <property type="expression patterns" value="Expressed in semen and 89 other cell types or tissues"/>
</dbReference>
<dbReference type="GO" id="GO:0001669">
    <property type="term" value="C:acrosomal vesicle"/>
    <property type="evidence" value="ECO:0007669"/>
    <property type="project" value="Ensembl"/>
</dbReference>
<dbReference type="GO" id="GO:0033178">
    <property type="term" value="C:proton-transporting two-sector ATPase complex, catalytic domain"/>
    <property type="evidence" value="ECO:0007669"/>
    <property type="project" value="InterPro"/>
</dbReference>
<dbReference type="GO" id="GO:0046961">
    <property type="term" value="F:proton-transporting ATPase activity, rotational mechanism"/>
    <property type="evidence" value="ECO:0000318"/>
    <property type="project" value="GO_Central"/>
</dbReference>
<dbReference type="FunFam" id="3.30.2320.30:FF:000001">
    <property type="entry name" value="V-type proton atpase subunit e 1"/>
    <property type="match status" value="1"/>
</dbReference>
<dbReference type="Gene3D" id="6.10.250.1620">
    <property type="match status" value="1"/>
</dbReference>
<dbReference type="Gene3D" id="3.30.2320.30">
    <property type="entry name" value="ATP synthase, E subunit, C-terminal"/>
    <property type="match status" value="1"/>
</dbReference>
<dbReference type="HAMAP" id="MF_00311">
    <property type="entry name" value="ATP_synth_E_arch"/>
    <property type="match status" value="1"/>
</dbReference>
<dbReference type="InterPro" id="IPR038495">
    <property type="entry name" value="ATPase_E_C"/>
</dbReference>
<dbReference type="InterPro" id="IPR002842">
    <property type="entry name" value="ATPase_V1_Esu"/>
</dbReference>
<dbReference type="PANTHER" id="PTHR45715">
    <property type="entry name" value="ATPASE H+-TRANSPORTING V1 SUBUNIT E1A-RELATED"/>
    <property type="match status" value="1"/>
</dbReference>
<dbReference type="Pfam" id="PF01991">
    <property type="entry name" value="vATP-synt_E"/>
    <property type="match status" value="1"/>
</dbReference>
<dbReference type="SUPFAM" id="SSF160527">
    <property type="entry name" value="V-type ATPase subunit E-like"/>
    <property type="match status" value="1"/>
</dbReference>
<accession>Q32LB7</accession>
<comment type="function">
    <text evidence="1">Subunit of the V1 complex of vacuolar(H+)-ATPase (V-ATPase), a multisubunit enzyme composed of a peripheral complex (V1) that hydrolyzes ATP and a membrane integral complex (V0) that translocates protons. V-ATPase is responsible for acidifying and maintaining the pH of intracellular compartments and in some cell types, is targeted to the plasma membrane, where it is responsible for acidifying the extracellular environment.</text>
</comment>
<comment type="subunit">
    <text evidence="1">V-ATPase is a heteromultimeric enzyme made up of two complexes: the ATP-hydrolytic V1 complex and the proton translocation V0 complex. The V1 complex consists of three catalytic AB heterodimers that form a heterohexamer, three peripheral stalks each consisting of EG heterodimers, one central rotor including subunits D and F, and the regulatory subunits C and H. The proton translocation complex V0 consists of the proton transport subunit a, a ring of proteolipid subunits c9c'', rotary subunit d, subunits e and f, and the accessory subunits ATP6AP1/Ac45 and ATP6AP2/PRR.</text>
</comment>
<comment type="similarity">
    <text evidence="2">Belongs to the V-ATPase E subunit family.</text>
</comment>
<gene>
    <name type="primary">ATP6V1E2</name>
</gene>
<sequence>MALSDVDVQKQIKHMMAFIEQEANEKAEEIDAKAEEEFNIEKGRLVQTQRLKIMEYYEKKEKQIEQQKKIQMSTLRNQARLKVLRARNDLISELLNDAKLRLSRIVTDPEFYQGLLDKLVLQGLLRLLEPVVIVRCRPQDHFLVEAAVQRAIPQYTAVSHRCVEVQVDKEVQLATDTTGGVEVYSSDQRIMVSNTLESRLDLLSQQKMPEIRKALFGANANRKFFV</sequence>
<feature type="chain" id="PRO_0000282343" description="V-type proton ATPase subunit E 2">
    <location>
        <begin position="1"/>
        <end position="226"/>
    </location>
</feature>
<organism>
    <name type="scientific">Bos taurus</name>
    <name type="common">Bovine</name>
    <dbReference type="NCBI Taxonomy" id="9913"/>
    <lineage>
        <taxon>Eukaryota</taxon>
        <taxon>Metazoa</taxon>
        <taxon>Chordata</taxon>
        <taxon>Craniata</taxon>
        <taxon>Vertebrata</taxon>
        <taxon>Euteleostomi</taxon>
        <taxon>Mammalia</taxon>
        <taxon>Eutheria</taxon>
        <taxon>Laurasiatheria</taxon>
        <taxon>Artiodactyla</taxon>
        <taxon>Ruminantia</taxon>
        <taxon>Pecora</taxon>
        <taxon>Bovidae</taxon>
        <taxon>Bovinae</taxon>
        <taxon>Bos</taxon>
    </lineage>
</organism>